<feature type="initiator methionine" description="Removed" evidence="2">
    <location>
        <position position="1"/>
    </location>
</feature>
<feature type="chain" id="PRO_0000232445" description="Prefoldin subunit 1">
    <location>
        <begin position="2"/>
        <end position="122"/>
    </location>
</feature>
<feature type="modified residue" description="N-acetylalanine" evidence="2">
    <location>
        <position position="2"/>
    </location>
</feature>
<keyword id="KW-0007">Acetylation</keyword>
<keyword id="KW-0143">Chaperone</keyword>
<keyword id="KW-1185">Reference proteome</keyword>
<name>PFD1_BOVIN</name>
<comment type="function">
    <text evidence="1">Binds specifically to cytosolic chaperonin (c-CPN) and transfers target proteins to it. Binds to nascent polypeptide chain and promotes folding in an environment in which there are many competing pathways for nonnative proteins (By similarity).</text>
</comment>
<comment type="subunit">
    <text evidence="1">Heterohexamer of two PFD-alpha type and four PFD-beta type subunits.</text>
</comment>
<comment type="similarity">
    <text evidence="3">Belongs to the prefoldin subunit beta family.</text>
</comment>
<accession>Q3SZE2</accession>
<organism>
    <name type="scientific">Bos taurus</name>
    <name type="common">Bovine</name>
    <dbReference type="NCBI Taxonomy" id="9913"/>
    <lineage>
        <taxon>Eukaryota</taxon>
        <taxon>Metazoa</taxon>
        <taxon>Chordata</taxon>
        <taxon>Craniata</taxon>
        <taxon>Vertebrata</taxon>
        <taxon>Euteleostomi</taxon>
        <taxon>Mammalia</taxon>
        <taxon>Eutheria</taxon>
        <taxon>Laurasiatheria</taxon>
        <taxon>Artiodactyla</taxon>
        <taxon>Ruminantia</taxon>
        <taxon>Pecora</taxon>
        <taxon>Bovidae</taxon>
        <taxon>Bovinae</taxon>
        <taxon>Bos</taxon>
    </lineage>
</organism>
<gene>
    <name type="primary">PFDN1</name>
</gene>
<dbReference type="EMBL" id="BC102924">
    <property type="protein sequence ID" value="AAI02925.1"/>
    <property type="molecule type" value="mRNA"/>
</dbReference>
<dbReference type="RefSeq" id="NP_001071530.1">
    <property type="nucleotide sequence ID" value="NM_001078062.1"/>
</dbReference>
<dbReference type="SMR" id="Q3SZE2"/>
<dbReference type="FunCoup" id="Q3SZE2">
    <property type="interactions" value="2944"/>
</dbReference>
<dbReference type="STRING" id="9913.ENSBTAP00000064720"/>
<dbReference type="PaxDb" id="9913-ENSBTAP00000022078"/>
<dbReference type="GeneID" id="616553"/>
<dbReference type="KEGG" id="bta:616553"/>
<dbReference type="CTD" id="5201"/>
<dbReference type="VEuPathDB" id="HostDB:ENSBTAG00000051779"/>
<dbReference type="eggNOG" id="KOG3501">
    <property type="taxonomic scope" value="Eukaryota"/>
</dbReference>
<dbReference type="HOGENOM" id="CLU_122140_2_0_1"/>
<dbReference type="InParanoid" id="Q3SZE2"/>
<dbReference type="OMA" id="REMIQQK"/>
<dbReference type="OrthoDB" id="5242628at2759"/>
<dbReference type="TreeFam" id="TF106490"/>
<dbReference type="Proteomes" id="UP000009136">
    <property type="component" value="Chromosome 7"/>
</dbReference>
<dbReference type="Bgee" id="ENSBTAG00000051779">
    <property type="expression patterns" value="Expressed in oocyte and 108 other cell types or tissues"/>
</dbReference>
<dbReference type="GO" id="GO:0005737">
    <property type="term" value="C:cytoplasm"/>
    <property type="evidence" value="ECO:0000318"/>
    <property type="project" value="GO_Central"/>
</dbReference>
<dbReference type="GO" id="GO:0005829">
    <property type="term" value="C:cytosol"/>
    <property type="evidence" value="ECO:0000304"/>
    <property type="project" value="Reactome"/>
</dbReference>
<dbReference type="GO" id="GO:0016272">
    <property type="term" value="C:prefoldin complex"/>
    <property type="evidence" value="ECO:0007669"/>
    <property type="project" value="InterPro"/>
</dbReference>
<dbReference type="GO" id="GO:0044183">
    <property type="term" value="F:protein folding chaperone"/>
    <property type="evidence" value="ECO:0000318"/>
    <property type="project" value="GO_Central"/>
</dbReference>
<dbReference type="GO" id="GO:0051082">
    <property type="term" value="F:unfolded protein binding"/>
    <property type="evidence" value="ECO:0000318"/>
    <property type="project" value="GO_Central"/>
</dbReference>
<dbReference type="GO" id="GO:0006457">
    <property type="term" value="P:protein folding"/>
    <property type="evidence" value="ECO:0000318"/>
    <property type="project" value="GO_Central"/>
</dbReference>
<dbReference type="CDD" id="cd23164">
    <property type="entry name" value="Prefoldin_1"/>
    <property type="match status" value="1"/>
</dbReference>
<dbReference type="FunFam" id="1.10.287.370:FF:000006">
    <property type="entry name" value="prefoldin subunit 1"/>
    <property type="match status" value="1"/>
</dbReference>
<dbReference type="Gene3D" id="1.10.287.370">
    <property type="match status" value="1"/>
</dbReference>
<dbReference type="InterPro" id="IPR002777">
    <property type="entry name" value="PFD_beta-like"/>
</dbReference>
<dbReference type="InterPro" id="IPR009053">
    <property type="entry name" value="Prefoldin"/>
</dbReference>
<dbReference type="PANTHER" id="PTHR20903:SF0">
    <property type="entry name" value="PREFOLDIN SUBUNIT 1"/>
    <property type="match status" value="1"/>
</dbReference>
<dbReference type="PANTHER" id="PTHR20903">
    <property type="entry name" value="PREFOLDIN SUBUNIT 1-RELATED"/>
    <property type="match status" value="1"/>
</dbReference>
<dbReference type="Pfam" id="PF01920">
    <property type="entry name" value="Prefoldin_2"/>
    <property type="match status" value="1"/>
</dbReference>
<dbReference type="SUPFAM" id="SSF46579">
    <property type="entry name" value="Prefoldin"/>
    <property type="match status" value="1"/>
</dbReference>
<evidence type="ECO:0000250" key="1"/>
<evidence type="ECO:0000250" key="2">
    <source>
        <dbReference type="UniProtKB" id="O60925"/>
    </source>
</evidence>
<evidence type="ECO:0000305" key="3"/>
<proteinExistence type="evidence at transcript level"/>
<protein>
    <recommendedName>
        <fullName>Prefoldin subunit 1</fullName>
    </recommendedName>
</protein>
<sequence length="122" mass="14223">MAAPVDLELKKAFTELQAKVIDTQQKVKLADVQIEQLNRTKKHAHLTDTEIMTLVDETNMYEGVGRMFILQSKEAIHNQLLEKQKIAEEKIKELEQKKSYLERSVKEAEDNIREMLMARRAQ</sequence>
<reference key="1">
    <citation type="submission" date="2005-08" db="EMBL/GenBank/DDBJ databases">
        <authorList>
            <consortium name="NIH - Mammalian Gene Collection (MGC) project"/>
        </authorList>
    </citation>
    <scope>NUCLEOTIDE SEQUENCE [LARGE SCALE MRNA]</scope>
    <source>
        <strain>Hereford</strain>
        <tissue>Pancreas</tissue>
    </source>
</reference>